<reference key="1">
    <citation type="journal article" date="2009" name="BMC Genomics">
        <title>The complete genome sequence of Staphylothermus marinus reveals differences in sulfur metabolism among heterotrophic Crenarchaeota.</title>
        <authorList>
            <person name="Anderson I.J."/>
            <person name="Dharmarajan L."/>
            <person name="Rodriguez J."/>
            <person name="Hooper S."/>
            <person name="Porat I."/>
            <person name="Ulrich L.E."/>
            <person name="Elkins J.G."/>
            <person name="Mavromatis K."/>
            <person name="Sun H."/>
            <person name="Land M."/>
            <person name="Lapidus A."/>
            <person name="Lucas S."/>
            <person name="Barry K."/>
            <person name="Huber H."/>
            <person name="Zhulin I.B."/>
            <person name="Whitman W.B."/>
            <person name="Mukhopadhyay B."/>
            <person name="Woese C."/>
            <person name="Bristow J."/>
            <person name="Kyrpides N."/>
        </authorList>
    </citation>
    <scope>NUCLEOTIDE SEQUENCE [LARGE SCALE GENOMIC DNA]</scope>
    <source>
        <strain>ATCC 43588 / DSM 3639 / JCM 9404 / F1</strain>
    </source>
</reference>
<reference key="2">
    <citation type="journal article" date="2009" name="Stand. Genomic Sci.">
        <title>Complete genome sequence of Staphylothermus marinus Stetter and Fiala 1986 type strain F1.</title>
        <authorList>
            <person name="Anderson I.J."/>
            <person name="Sun H."/>
            <person name="Lapidus A."/>
            <person name="Copeland A."/>
            <person name="Glavina Del Rio T."/>
            <person name="Tice H."/>
            <person name="Dalin E."/>
            <person name="Lucas S."/>
            <person name="Barry K."/>
            <person name="Land M."/>
            <person name="Richardson P."/>
            <person name="Huber H."/>
            <person name="Kyrpides N.C."/>
        </authorList>
    </citation>
    <scope>NUCLEOTIDE SEQUENCE [LARGE SCALE GENOMIC DNA]</scope>
    <source>
        <strain>ATCC 43588 / DSM 3639 / JCM 9404 / F1</strain>
    </source>
</reference>
<accession>A3DNB9</accession>
<keyword id="KW-1185">Reference proteome</keyword>
<keyword id="KW-0687">Ribonucleoprotein</keyword>
<keyword id="KW-0689">Ribosomal protein</keyword>
<keyword id="KW-0694">RNA-binding</keyword>
<keyword id="KW-0699">rRNA-binding</keyword>
<name>RS4E_STAMF</name>
<proteinExistence type="inferred from homology"/>
<evidence type="ECO:0000255" key="1">
    <source>
        <dbReference type="HAMAP-Rule" id="MF_00485"/>
    </source>
</evidence>
<evidence type="ECO:0000305" key="2"/>
<feature type="chain" id="PRO_1000081349" description="Small ribosomal subunit protein eS4">
    <location>
        <begin position="1"/>
        <end position="252"/>
    </location>
</feature>
<feature type="domain" description="S4 RNA-binding" evidence="1">
    <location>
        <begin position="43"/>
        <end position="105"/>
    </location>
</feature>
<gene>
    <name evidence="1" type="primary">rps4e</name>
    <name type="ordered locus">Smar_1031</name>
</gene>
<organism>
    <name type="scientific">Staphylothermus marinus (strain ATCC 43588 / DSM 3639 / JCM 9404 / F1)</name>
    <dbReference type="NCBI Taxonomy" id="399550"/>
    <lineage>
        <taxon>Archaea</taxon>
        <taxon>Thermoproteota</taxon>
        <taxon>Thermoprotei</taxon>
        <taxon>Desulfurococcales</taxon>
        <taxon>Desulfurococcaceae</taxon>
        <taxon>Staphylothermus</taxon>
    </lineage>
</organism>
<sequence length="252" mass="28501">MARMGGKKHLKALVAPKFWPILRKEYKWAVKPSPGPHPIERCFPLLIIVRDILGYAKTAREARKLISEGHFKVDGRVRKNYKYPVGLMDVIEIVDTGETYRVIPVPVKVLGLIEIDKEEAKYKLSRIENKTTVKGGHIQLNLHDGRNVLIKVSDPKNPVEDIYKTLGTLQISIPEQQILNYIPLDEGTLVIISGGRNVGRVGKVVSIHKGIRRHRSIVTIEDKHGNKFQTSLTYVFPIGKEEPLIKLPEGAW</sequence>
<comment type="similarity">
    <text evidence="1">Belongs to the eukaryotic ribosomal protein eS4 family.</text>
</comment>
<protein>
    <recommendedName>
        <fullName evidence="1">Small ribosomal subunit protein eS4</fullName>
    </recommendedName>
    <alternativeName>
        <fullName evidence="2">30S ribosomal protein S4e</fullName>
    </alternativeName>
</protein>
<dbReference type="EMBL" id="CP000575">
    <property type="protein sequence ID" value="ABN70129.1"/>
    <property type="molecule type" value="Genomic_DNA"/>
</dbReference>
<dbReference type="RefSeq" id="WP_011839320.1">
    <property type="nucleotide sequence ID" value="NC_009033.1"/>
</dbReference>
<dbReference type="SMR" id="A3DNB9"/>
<dbReference type="STRING" id="399550.Smar_1031"/>
<dbReference type="GeneID" id="4908001"/>
<dbReference type="KEGG" id="smr:Smar_1031"/>
<dbReference type="eggNOG" id="arCOG04093">
    <property type="taxonomic scope" value="Archaea"/>
</dbReference>
<dbReference type="HOGENOM" id="CLU_060400_0_0_2"/>
<dbReference type="OrthoDB" id="372073at2157"/>
<dbReference type="Proteomes" id="UP000000254">
    <property type="component" value="Chromosome"/>
</dbReference>
<dbReference type="GO" id="GO:0022627">
    <property type="term" value="C:cytosolic small ribosomal subunit"/>
    <property type="evidence" value="ECO:0007669"/>
    <property type="project" value="TreeGrafter"/>
</dbReference>
<dbReference type="GO" id="GO:0019843">
    <property type="term" value="F:rRNA binding"/>
    <property type="evidence" value="ECO:0007669"/>
    <property type="project" value="UniProtKB-KW"/>
</dbReference>
<dbReference type="GO" id="GO:0003735">
    <property type="term" value="F:structural constituent of ribosome"/>
    <property type="evidence" value="ECO:0007669"/>
    <property type="project" value="InterPro"/>
</dbReference>
<dbReference type="GO" id="GO:0006412">
    <property type="term" value="P:translation"/>
    <property type="evidence" value="ECO:0007669"/>
    <property type="project" value="UniProtKB-UniRule"/>
</dbReference>
<dbReference type="CDD" id="cd06087">
    <property type="entry name" value="KOW_RPS4"/>
    <property type="match status" value="1"/>
</dbReference>
<dbReference type="CDD" id="cd00165">
    <property type="entry name" value="S4"/>
    <property type="match status" value="1"/>
</dbReference>
<dbReference type="FunFam" id="3.10.290.10:FF:000002">
    <property type="entry name" value="40S ribosomal protein S4"/>
    <property type="match status" value="1"/>
</dbReference>
<dbReference type="Gene3D" id="2.30.30.30">
    <property type="match status" value="1"/>
</dbReference>
<dbReference type="Gene3D" id="2.40.50.740">
    <property type="match status" value="1"/>
</dbReference>
<dbReference type="Gene3D" id="3.10.290.10">
    <property type="entry name" value="RNA-binding S4 domain"/>
    <property type="match status" value="1"/>
</dbReference>
<dbReference type="HAMAP" id="MF_00485">
    <property type="entry name" value="Ribosomal_eS4"/>
    <property type="match status" value="1"/>
</dbReference>
<dbReference type="InterPro" id="IPR014722">
    <property type="entry name" value="Rib_uL2_dom2"/>
</dbReference>
<dbReference type="InterPro" id="IPR000876">
    <property type="entry name" value="Ribosomal_eS4"/>
</dbReference>
<dbReference type="InterPro" id="IPR013845">
    <property type="entry name" value="Ribosomal_eS4_central_region"/>
</dbReference>
<dbReference type="InterPro" id="IPR038237">
    <property type="entry name" value="Ribosomal_eS4_central_sf"/>
</dbReference>
<dbReference type="InterPro" id="IPR041982">
    <property type="entry name" value="Ribosomal_eS4_KOW"/>
</dbReference>
<dbReference type="InterPro" id="IPR013843">
    <property type="entry name" value="Ribosomal_eS4_N"/>
</dbReference>
<dbReference type="InterPro" id="IPR002942">
    <property type="entry name" value="S4_RNA-bd"/>
</dbReference>
<dbReference type="InterPro" id="IPR036986">
    <property type="entry name" value="S4_RNA-bd_sf"/>
</dbReference>
<dbReference type="NCBIfam" id="NF003312">
    <property type="entry name" value="PRK04313.1"/>
    <property type="match status" value="1"/>
</dbReference>
<dbReference type="PANTHER" id="PTHR11581">
    <property type="entry name" value="30S/40S RIBOSOMAL PROTEIN S4"/>
    <property type="match status" value="1"/>
</dbReference>
<dbReference type="PANTHER" id="PTHR11581:SF0">
    <property type="entry name" value="SMALL RIBOSOMAL SUBUNIT PROTEIN ES4"/>
    <property type="match status" value="1"/>
</dbReference>
<dbReference type="Pfam" id="PF00900">
    <property type="entry name" value="Ribosomal_S4e"/>
    <property type="match status" value="1"/>
</dbReference>
<dbReference type="Pfam" id="PF08071">
    <property type="entry name" value="RS4NT"/>
    <property type="match status" value="1"/>
</dbReference>
<dbReference type="Pfam" id="PF01479">
    <property type="entry name" value="S4"/>
    <property type="match status" value="1"/>
</dbReference>
<dbReference type="PIRSF" id="PIRSF002116">
    <property type="entry name" value="Ribosomal_S4"/>
    <property type="match status" value="1"/>
</dbReference>
<dbReference type="SMART" id="SM00363">
    <property type="entry name" value="S4"/>
    <property type="match status" value="1"/>
</dbReference>
<dbReference type="SUPFAM" id="SSF55174">
    <property type="entry name" value="Alpha-L RNA-binding motif"/>
    <property type="match status" value="1"/>
</dbReference>
<dbReference type="PROSITE" id="PS50889">
    <property type="entry name" value="S4"/>
    <property type="match status" value="1"/>
</dbReference>